<sequence length="571" mass="64943">MSIMLPINNNFSLSQNSFYNTISGTYADYFSAWDKWEKQALPGENRNEAVSLLKECLINQFSELQLNRLNLSSLPDNLPPQITVLEITQNALISLPELPASLEYLDACDNRLSTLPELPASLKHLDVDNNQLTMLPELPALLEYINADNNQLTMLPELPTSLEVLSVRNNQLTFLPELPESLEALDVSTNLLESLPAVPVRNHHSEETEIFFRCRENRITHIPENILSLDPTCTIILEDNPLSSRIRESLSQQTAQPDYHGPRIYFSMSDGQQNTLHRPLADAVTAWFPENKQSDVSQIWHAFEHEEHANTFSAFLDRLSDTVSARNTSGFREQVAAWLEKLSTSAELRQQSFAVAADATESCEDRVALTWNNLRKTLLVHQASEGLFDNDTGALLSLGREMFRLEILEDIARDKVRTLHFVDEIEVYLAFQTMLAEKLQLSTAVKEMRFYGVSGVTANDLRTAEAMVRSREENEFTDWFSLWGPWHAVLKRTEADRWAQAEEQKYEMLENEYSQRVADRLKASGLSGDADAEREAGAQVMRETEQQIYRQVTDEVLALRLSENGSQLHHS</sequence>
<proteinExistence type="evidence at protein level"/>
<comment type="function">
    <text evidence="3">Effector proteins function to alter host cell physiology and promote bacterial survival in host tissues. This protein is an E3 ubiquitin ligase that interferes with host's ubiquitination pathway. Synthesizes a 'Lys-48'-linked ubiquitin chain, which requires non-covalent binding between ubiquitin and the host ubiquitin-conjugating enzyme UBE2D1.</text>
</comment>
<comment type="catalytic activity">
    <reaction>
        <text>S-ubiquitinyl-[E2 ubiquitin-conjugating enzyme]-L-cysteine + [acceptor protein]-L-lysine = [E2 ubiquitin-conjugating enzyme]-L-cysteine + N(6)-ubiquitinyl-[acceptor protein]-L-lysine.</text>
        <dbReference type="EC" id="2.3.2.27"/>
    </reaction>
</comment>
<comment type="subcellular location">
    <subcellularLocation>
        <location evidence="1">Secreted</location>
    </subcellularLocation>
    <subcellularLocation>
        <location evidence="1">Host cytoplasm</location>
    </subcellularLocation>
    <text evidence="1">Secreted via Mxi-Spa type III secretion system (T3SS), and delivered into the host cytoplasm.</text>
</comment>
<comment type="domain">
    <text evidence="3">The LRR (leucine-rich repeat) domain forms a slightly curved solenoid and may mediate interaction with target proteins.</text>
</comment>
<comment type="PTM">
    <text evidence="3">Ubiquitinated in the presence of host E1 ubiquitin-activating enzyme, E2 ubiquitin-conjugating enzyme UBE2D3 and ubiquitin.</text>
</comment>
<comment type="similarity">
    <text evidence="2 4">Belongs to the LRR-containing bacterial E3 ligase family.</text>
</comment>
<organism>
    <name type="scientific">Shigella flexneri</name>
    <dbReference type="NCBI Taxonomy" id="623"/>
    <lineage>
        <taxon>Bacteria</taxon>
        <taxon>Pseudomonadati</taxon>
        <taxon>Pseudomonadota</taxon>
        <taxon>Gammaproteobacteria</taxon>
        <taxon>Enterobacterales</taxon>
        <taxon>Enterobacteriaceae</taxon>
        <taxon>Shigella</taxon>
    </lineage>
</organism>
<evidence type="ECO:0000250" key="1"/>
<evidence type="ECO:0000255" key="2">
    <source>
        <dbReference type="PROSITE-ProRule" id="PRU01398"/>
    </source>
</evidence>
<evidence type="ECO:0000269" key="3">
    <source>
    </source>
</evidence>
<evidence type="ECO:0000305" key="4"/>
<evidence type="ECO:0007829" key="5">
    <source>
        <dbReference type="PDB" id="3CVR"/>
    </source>
</evidence>
<reference key="1">
    <citation type="journal article" date="2002" name="Nucleic Acids Res.">
        <title>Genome sequence of Shigella flexneri 2a: insights into pathogenicity through comparison with genomes of Escherichia coli K12 and O157.</title>
        <authorList>
            <person name="Jin Q."/>
            <person name="Yuan Z."/>
            <person name="Xu J."/>
            <person name="Wang Y."/>
            <person name="Shen Y."/>
            <person name="Lu W."/>
            <person name="Wang J."/>
            <person name="Liu H."/>
            <person name="Yang J."/>
            <person name="Yang F."/>
            <person name="Zhang X."/>
            <person name="Zhang J."/>
            <person name="Yang G."/>
            <person name="Wu H."/>
            <person name="Qu D."/>
            <person name="Dong J."/>
            <person name="Sun L."/>
            <person name="Xue Y."/>
            <person name="Zhao A."/>
            <person name="Gao Y."/>
            <person name="Zhu J."/>
            <person name="Kan B."/>
            <person name="Ding K."/>
            <person name="Chen S."/>
            <person name="Cheng H."/>
            <person name="Yao Z."/>
            <person name="He B."/>
            <person name="Chen R."/>
            <person name="Ma D."/>
            <person name="Qiang B."/>
            <person name="Wen Y."/>
            <person name="Hou Y."/>
            <person name="Yu J."/>
        </authorList>
    </citation>
    <scope>NUCLEOTIDE SEQUENCE [LARGE SCALE GENOMIC DNA]</scope>
    <source>
        <strain>301 / Serotype 2a</strain>
    </source>
</reference>
<reference key="2">
    <citation type="journal article" date="2008" name="Nat. Struct. Mol. Biol.">
        <title>Structure of a Shigella effector reveals a new class of ubiquitin ligases.</title>
        <authorList>
            <person name="Zhu Y."/>
            <person name="Li H."/>
            <person name="Hu L."/>
            <person name="Wang J."/>
            <person name="Zhou Y."/>
            <person name="Pang Z."/>
            <person name="Liu L."/>
            <person name="Shao F."/>
        </authorList>
    </citation>
    <scope>X-RAY CRYSTALLOGRAPHY (2.8 ANGSTROMS)</scope>
    <scope>FUNCTION</scope>
    <scope>UBIQUITINATION</scope>
    <scope>DOMAIN</scope>
    <scope>LEUCINE-RICH REPEATS</scope>
    <scope>MUTAGENESIS OF CYS-363 AND ASP-365</scope>
    <source>
        <strain>301 / Serotype 2a</strain>
    </source>
</reference>
<feature type="chain" id="PRO_0000391754" description="E3 ubiquitin-protein ligase ipaH3">
    <location>
        <begin position="1"/>
        <end position="571"/>
    </location>
</feature>
<feature type="repeat" description="LRR 1" evidence="3">
    <location>
        <begin position="58"/>
        <end position="81"/>
    </location>
</feature>
<feature type="repeat" description="LRR 2" evidence="3">
    <location>
        <begin position="83"/>
        <end position="99"/>
    </location>
</feature>
<feature type="repeat" description="LRR 3" evidence="3">
    <location>
        <begin position="100"/>
        <end position="119"/>
    </location>
</feature>
<feature type="repeat" description="LRR 4" evidence="3">
    <location>
        <begin position="120"/>
        <end position="144"/>
    </location>
</feature>
<feature type="repeat" description="LRR 5" evidence="3">
    <location>
        <begin position="146"/>
        <end position="159"/>
    </location>
</feature>
<feature type="repeat" description="LRR 6" evidence="3">
    <location>
        <begin position="160"/>
        <end position="184"/>
    </location>
</feature>
<feature type="repeat" description="LRR 7" evidence="3">
    <location>
        <begin position="186"/>
        <end position="202"/>
    </location>
</feature>
<feature type="repeat" description="LRR 8" evidence="3">
    <location>
        <begin position="205"/>
        <end position="229"/>
    </location>
</feature>
<feature type="repeat" description="LRR 9" evidence="3">
    <location>
        <begin position="232"/>
        <end position="260"/>
    </location>
</feature>
<feature type="domain" description="NEL" evidence="2">
    <location>
        <begin position="279"/>
        <end position="571"/>
    </location>
</feature>
<feature type="region of interest" description="Interaction with target proteins">
    <location>
        <begin position="1"/>
        <end position="260"/>
    </location>
</feature>
<feature type="region of interest" description="Linker">
    <location>
        <begin position="269"/>
        <end position="278"/>
    </location>
</feature>
<feature type="region of interest" description="E3 ubiquitin-protein ligase catalytic domain">
    <location>
        <begin position="279"/>
        <end position="571"/>
    </location>
</feature>
<feature type="active site" description="Glycyl thioester intermediate" evidence="2">
    <location>
        <position position="363"/>
    </location>
</feature>
<feature type="mutagenesis site" description="Loss of ubiquitin ligase activity." evidence="3">
    <original>C</original>
    <variation>A</variation>
    <variation>S</variation>
    <location>
        <position position="363"/>
    </location>
</feature>
<feature type="mutagenesis site" description="Loss of ubiquitin ligase activity, but acts as a thioesterase that uses Cys-363 to hydrolyze the ubiquitin-E2 thioester." evidence="3">
    <original>D</original>
    <variation>N</variation>
    <location>
        <position position="365"/>
    </location>
</feature>
<feature type="helix" evidence="5">
    <location>
        <begin position="26"/>
        <end position="37"/>
    </location>
</feature>
<feature type="helix" evidence="5">
    <location>
        <begin position="46"/>
        <end position="58"/>
    </location>
</feature>
<feature type="strand" evidence="5">
    <location>
        <begin position="62"/>
        <end position="65"/>
    </location>
</feature>
<feature type="strand" evidence="5">
    <location>
        <begin position="83"/>
        <end position="86"/>
    </location>
</feature>
<feature type="strand" evidence="5">
    <location>
        <begin position="104"/>
        <end position="106"/>
    </location>
</feature>
<feature type="strand" evidence="5">
    <location>
        <begin position="124"/>
        <end position="126"/>
    </location>
</feature>
<feature type="strand" evidence="5">
    <location>
        <begin position="144"/>
        <end position="146"/>
    </location>
</feature>
<feature type="strand" evidence="5">
    <location>
        <begin position="164"/>
        <end position="166"/>
    </location>
</feature>
<feature type="strand" evidence="5">
    <location>
        <begin position="184"/>
        <end position="186"/>
    </location>
</feature>
<feature type="strand" evidence="5">
    <location>
        <begin position="210"/>
        <end position="213"/>
    </location>
</feature>
<feature type="helix" evidence="5">
    <location>
        <begin position="224"/>
        <end position="228"/>
    </location>
</feature>
<feature type="strand" evidence="5">
    <location>
        <begin position="233"/>
        <end position="236"/>
    </location>
</feature>
<feature type="strand" evidence="5">
    <location>
        <begin position="239"/>
        <end position="241"/>
    </location>
</feature>
<feature type="helix" evidence="5">
    <location>
        <begin position="244"/>
        <end position="255"/>
    </location>
</feature>
<feature type="strand" evidence="5">
    <location>
        <begin position="263"/>
        <end position="265"/>
    </location>
</feature>
<feature type="helix" evidence="5">
    <location>
        <begin position="282"/>
        <end position="285"/>
    </location>
</feature>
<feature type="helix" evidence="5">
    <location>
        <begin position="296"/>
        <end position="301"/>
    </location>
</feature>
<feature type="turn" evidence="5">
    <location>
        <begin position="302"/>
        <end position="305"/>
    </location>
</feature>
<feature type="helix" evidence="5">
    <location>
        <begin position="309"/>
        <end position="321"/>
    </location>
</feature>
<feature type="turn" evidence="5">
    <location>
        <begin position="322"/>
        <end position="325"/>
    </location>
</feature>
<feature type="helix" evidence="5">
    <location>
        <begin position="331"/>
        <end position="344"/>
    </location>
</feature>
<feature type="helix" evidence="5">
    <location>
        <begin position="346"/>
        <end position="358"/>
    </location>
</feature>
<feature type="helix" evidence="5">
    <location>
        <begin position="367"/>
        <end position="383"/>
    </location>
</feature>
<feature type="turn" evidence="5">
    <location>
        <begin position="384"/>
        <end position="386"/>
    </location>
</feature>
<feature type="helix" evidence="5">
    <location>
        <begin position="392"/>
        <end position="416"/>
    </location>
</feature>
<feature type="strand" evidence="5">
    <location>
        <begin position="420"/>
        <end position="422"/>
    </location>
</feature>
<feature type="helix" evidence="5">
    <location>
        <begin position="424"/>
        <end position="435"/>
    </location>
</feature>
<feature type="turn" evidence="5">
    <location>
        <begin position="436"/>
        <end position="440"/>
    </location>
</feature>
<feature type="strand" evidence="5">
    <location>
        <begin position="448"/>
        <end position="450"/>
    </location>
</feature>
<feature type="helix" evidence="5">
    <location>
        <begin position="458"/>
        <end position="481"/>
    </location>
</feature>
<feature type="helix" evidence="5">
    <location>
        <begin position="484"/>
        <end position="492"/>
    </location>
</feature>
<feature type="helix" evidence="5">
    <location>
        <begin position="495"/>
        <end position="504"/>
    </location>
</feature>
<feature type="helix" evidence="5">
    <location>
        <begin position="543"/>
        <end position="559"/>
    </location>
</feature>
<name>IPA3_SHIFL</name>
<gene>
    <name type="primary">ipaH3</name>
    <name type="ordered locus">SF1383</name>
</gene>
<protein>
    <recommendedName>
        <fullName>E3 ubiquitin-protein ligase ipaH3</fullName>
        <ecNumber>2.3.2.27</ecNumber>
    </recommendedName>
    <alternativeName>
        <fullName evidence="4">RING-type E3 ubiquitin transferase ipaH3</fullName>
    </alternativeName>
</protein>
<keyword id="KW-0002">3D-structure</keyword>
<keyword id="KW-1035">Host cytoplasm</keyword>
<keyword id="KW-0433">Leucine-rich repeat</keyword>
<keyword id="KW-1185">Reference proteome</keyword>
<keyword id="KW-0677">Repeat</keyword>
<keyword id="KW-0964">Secreted</keyword>
<keyword id="KW-0808">Transferase</keyword>
<keyword id="KW-0832">Ubl conjugation</keyword>
<keyword id="KW-0833">Ubl conjugation pathway</keyword>
<keyword id="KW-0843">Virulence</keyword>
<accession>Q83RJ4</accession>
<dbReference type="EC" id="2.3.2.27"/>
<dbReference type="EMBL" id="AE005674">
    <property type="protein sequence ID" value="AAN42986.1"/>
    <property type="molecule type" value="Genomic_DNA"/>
</dbReference>
<dbReference type="RefSeq" id="WP_011069360.1">
    <property type="nucleotide sequence ID" value="NZ_CP123365.1"/>
</dbReference>
<dbReference type="PDB" id="3CVR">
    <property type="method" value="X-ray"/>
    <property type="resolution" value="2.80 A"/>
    <property type="chains" value="A=1-571"/>
</dbReference>
<dbReference type="PDBsum" id="3CVR"/>
<dbReference type="SMR" id="Q83RJ4"/>
<dbReference type="STRING" id="198214.SF1383"/>
<dbReference type="PaxDb" id="198214-SF1383"/>
<dbReference type="KEGG" id="sfl:SF1383"/>
<dbReference type="PATRIC" id="fig|198214.7.peg.1628"/>
<dbReference type="HOGENOM" id="CLU_018533_2_0_6"/>
<dbReference type="EvolutionaryTrace" id="Q83RJ4"/>
<dbReference type="Proteomes" id="UP000001006">
    <property type="component" value="Chromosome"/>
</dbReference>
<dbReference type="GO" id="GO:0005576">
    <property type="term" value="C:extracellular region"/>
    <property type="evidence" value="ECO:0007669"/>
    <property type="project" value="UniProtKB-SubCell"/>
</dbReference>
<dbReference type="GO" id="GO:0030430">
    <property type="term" value="C:host cell cytoplasm"/>
    <property type="evidence" value="ECO:0007669"/>
    <property type="project" value="UniProtKB-SubCell"/>
</dbReference>
<dbReference type="GO" id="GO:0004842">
    <property type="term" value="F:ubiquitin-protein transferase activity"/>
    <property type="evidence" value="ECO:0007669"/>
    <property type="project" value="InterPro"/>
</dbReference>
<dbReference type="GO" id="GO:0035821">
    <property type="term" value="P:modulation of process of another organism"/>
    <property type="evidence" value="ECO:0007669"/>
    <property type="project" value="UniProtKB-ARBA"/>
</dbReference>
<dbReference type="GO" id="GO:0016567">
    <property type="term" value="P:protein ubiquitination"/>
    <property type="evidence" value="ECO:0007669"/>
    <property type="project" value="InterPro"/>
</dbReference>
<dbReference type="FunFam" id="1.20.58.90:FF:000007">
    <property type="entry name" value="E3 ubiquitin-protein ligase ipaH9.8"/>
    <property type="match status" value="1"/>
</dbReference>
<dbReference type="FunFam" id="1.20.1270.130:FF:000001">
    <property type="entry name" value="Invasion plasmid antigen IpaH"/>
    <property type="match status" value="1"/>
</dbReference>
<dbReference type="FunFam" id="1.20.58.360:FF:000001">
    <property type="entry name" value="Probable E3 ubiquitin-protein ligase ipaH7.8"/>
    <property type="match status" value="1"/>
</dbReference>
<dbReference type="Gene3D" id="1.20.58.90">
    <property type="match status" value="1"/>
</dbReference>
<dbReference type="Gene3D" id="3.80.10.10">
    <property type="entry name" value="Ribonuclease Inhibitor"/>
    <property type="match status" value="1"/>
</dbReference>
<dbReference type="Gene3D" id="1.20.58.360">
    <property type="entry name" value="Shigella T3SS effector IpaH defines"/>
    <property type="match status" value="1"/>
</dbReference>
<dbReference type="Gene3D" id="1.20.1270.130">
    <property type="entry name" value="Shigella T3SS effector IpaH domain"/>
    <property type="match status" value="1"/>
</dbReference>
<dbReference type="InterPro" id="IPR001611">
    <property type="entry name" value="Leu-rich_rpt"/>
</dbReference>
<dbReference type="InterPro" id="IPR051071">
    <property type="entry name" value="LRR-bact_E3_ubiq_ligases"/>
</dbReference>
<dbReference type="InterPro" id="IPR032675">
    <property type="entry name" value="LRR_dom_sf"/>
</dbReference>
<dbReference type="InterPro" id="IPR032674">
    <property type="entry name" value="LRR_E3_ligase_N"/>
</dbReference>
<dbReference type="InterPro" id="IPR029487">
    <property type="entry name" value="NEL_dom"/>
</dbReference>
<dbReference type="NCBIfam" id="NF046045">
    <property type="entry name" value="IpaH_Shig"/>
    <property type="match status" value="1"/>
</dbReference>
<dbReference type="PANTHER" id="PTHR47114">
    <property type="match status" value="1"/>
</dbReference>
<dbReference type="PANTHER" id="PTHR47114:SF2">
    <property type="entry name" value="OLIGODENDROCYTE-MYELIN GLYCOPROTEIN"/>
    <property type="match status" value="1"/>
</dbReference>
<dbReference type="Pfam" id="PF12468">
    <property type="entry name" value="LRR_TTSS"/>
    <property type="match status" value="1"/>
</dbReference>
<dbReference type="Pfam" id="PF14496">
    <property type="entry name" value="NEL"/>
    <property type="match status" value="1"/>
</dbReference>
<dbReference type="SMART" id="SM00364">
    <property type="entry name" value="LRR_BAC"/>
    <property type="match status" value="6"/>
</dbReference>
<dbReference type="SUPFAM" id="SSF52058">
    <property type="entry name" value="L domain-like"/>
    <property type="match status" value="1"/>
</dbReference>
<dbReference type="PROSITE" id="PS51450">
    <property type="entry name" value="LRR"/>
    <property type="match status" value="4"/>
</dbReference>
<dbReference type="PROSITE" id="PS52053">
    <property type="entry name" value="NEL"/>
    <property type="match status" value="1"/>
</dbReference>